<evidence type="ECO:0000255" key="1">
    <source>
        <dbReference type="HAMAP-Rule" id="MF_00157"/>
    </source>
</evidence>
<organism>
    <name type="scientific">Chromohalobacter salexigens (strain ATCC BAA-138 / DSM 3043 / CIP 106854 / NCIMB 13768 / 1H11)</name>
    <dbReference type="NCBI Taxonomy" id="290398"/>
    <lineage>
        <taxon>Bacteria</taxon>
        <taxon>Pseudomonadati</taxon>
        <taxon>Pseudomonadota</taxon>
        <taxon>Gammaproteobacteria</taxon>
        <taxon>Oceanospirillales</taxon>
        <taxon>Halomonadaceae</taxon>
        <taxon>Chromohalobacter</taxon>
    </lineage>
</organism>
<feature type="chain" id="PRO_1000011388" description="Ribonuclease T">
    <location>
        <begin position="1"/>
        <end position="221"/>
    </location>
</feature>
<feature type="domain" description="Exonuclease" evidence="1">
    <location>
        <begin position="20"/>
        <end position="196"/>
    </location>
</feature>
<feature type="active site" description="Proton donor/acceptor" evidence="1">
    <location>
        <position position="183"/>
    </location>
</feature>
<feature type="binding site" evidence="1">
    <location>
        <position position="23"/>
    </location>
    <ligand>
        <name>Mg(2+)</name>
        <dbReference type="ChEBI" id="CHEBI:18420"/>
        <label>1</label>
        <note>catalytic</note>
    </ligand>
</feature>
<feature type="binding site" evidence="1">
    <location>
        <position position="23"/>
    </location>
    <ligand>
        <name>Mg(2+)</name>
        <dbReference type="ChEBI" id="CHEBI:18420"/>
        <label>2</label>
        <note>catalytic</note>
    </ligand>
</feature>
<feature type="binding site" evidence="1">
    <location>
        <position position="25"/>
    </location>
    <ligand>
        <name>Mg(2+)</name>
        <dbReference type="ChEBI" id="CHEBI:18420"/>
        <label>2</label>
        <note>catalytic</note>
    </ligand>
</feature>
<feature type="binding site" evidence="1">
    <location>
        <position position="183"/>
    </location>
    <ligand>
        <name>Mg(2+)</name>
        <dbReference type="ChEBI" id="CHEBI:18420"/>
        <label>2</label>
        <note>catalytic</note>
    </ligand>
</feature>
<feature type="binding site" evidence="1">
    <location>
        <position position="188"/>
    </location>
    <ligand>
        <name>Mg(2+)</name>
        <dbReference type="ChEBI" id="CHEBI:18420"/>
        <label>2</label>
        <note>catalytic</note>
    </ligand>
</feature>
<feature type="site" description="Important for substrate binding and specificity" evidence="1">
    <location>
        <position position="29"/>
    </location>
</feature>
<feature type="site" description="Important for substrate binding and specificity" evidence="1">
    <location>
        <position position="77"/>
    </location>
</feature>
<feature type="site" description="Important for substrate binding and specificity" evidence="1">
    <location>
        <position position="126"/>
    </location>
</feature>
<feature type="site" description="Important for substrate binding and specificity" evidence="1">
    <location>
        <position position="148"/>
    </location>
</feature>
<name>RNT_CHRSD</name>
<comment type="function">
    <text evidence="1">Trims short 3' overhangs of a variety of RNA species, leaving a one or two nucleotide 3' overhang. Responsible for the end-turnover of tRNA: specifically removes the terminal AMP residue from uncharged tRNA (tRNA-C-C-A). Also appears to be involved in tRNA biosynthesis.</text>
</comment>
<comment type="cofactor">
    <cofactor evidence="1">
        <name>Mg(2+)</name>
        <dbReference type="ChEBI" id="CHEBI:18420"/>
    </cofactor>
    <text evidence="1">Binds two Mg(2+) per subunit. The active form of the enzyme binds two Mg(2+) ions in its active site. The first Mg(2+) forms only one salt bridge with the protein.</text>
</comment>
<comment type="subunit">
    <text evidence="1">Homodimer.</text>
</comment>
<comment type="similarity">
    <text evidence="1">Belongs to the RNase T family.</text>
</comment>
<proteinExistence type="inferred from homology"/>
<dbReference type="EC" id="3.1.13.-" evidence="1"/>
<dbReference type="EMBL" id="CP000285">
    <property type="protein sequence ID" value="ABE59479.1"/>
    <property type="molecule type" value="Genomic_DNA"/>
</dbReference>
<dbReference type="RefSeq" id="WP_011507425.1">
    <property type="nucleotide sequence ID" value="NC_007963.1"/>
</dbReference>
<dbReference type="SMR" id="Q1QVM9"/>
<dbReference type="STRING" id="290398.Csal_2128"/>
<dbReference type="GeneID" id="95334844"/>
<dbReference type="KEGG" id="csa:Csal_2128"/>
<dbReference type="eggNOG" id="COG0847">
    <property type="taxonomic scope" value="Bacteria"/>
</dbReference>
<dbReference type="HOGENOM" id="CLU_082724_0_0_6"/>
<dbReference type="OrthoDB" id="9778264at2"/>
<dbReference type="Proteomes" id="UP000000239">
    <property type="component" value="Chromosome"/>
</dbReference>
<dbReference type="GO" id="GO:0005829">
    <property type="term" value="C:cytosol"/>
    <property type="evidence" value="ECO:0007669"/>
    <property type="project" value="TreeGrafter"/>
</dbReference>
<dbReference type="GO" id="GO:0008408">
    <property type="term" value="F:3'-5' exonuclease activity"/>
    <property type="evidence" value="ECO:0007669"/>
    <property type="project" value="TreeGrafter"/>
</dbReference>
<dbReference type="GO" id="GO:0000287">
    <property type="term" value="F:magnesium ion binding"/>
    <property type="evidence" value="ECO:0007669"/>
    <property type="project" value="UniProtKB-UniRule"/>
</dbReference>
<dbReference type="GO" id="GO:0003676">
    <property type="term" value="F:nucleic acid binding"/>
    <property type="evidence" value="ECO:0007669"/>
    <property type="project" value="InterPro"/>
</dbReference>
<dbReference type="GO" id="GO:0016896">
    <property type="term" value="F:RNA exonuclease activity, producing 5'-phosphomonoesters"/>
    <property type="evidence" value="ECO:0007669"/>
    <property type="project" value="UniProtKB-UniRule"/>
</dbReference>
<dbReference type="GO" id="GO:0045004">
    <property type="term" value="P:DNA replication proofreading"/>
    <property type="evidence" value="ECO:0007669"/>
    <property type="project" value="TreeGrafter"/>
</dbReference>
<dbReference type="GO" id="GO:0008033">
    <property type="term" value="P:tRNA processing"/>
    <property type="evidence" value="ECO:0007669"/>
    <property type="project" value="UniProtKB-KW"/>
</dbReference>
<dbReference type="CDD" id="cd06134">
    <property type="entry name" value="RNaseT"/>
    <property type="match status" value="1"/>
</dbReference>
<dbReference type="FunFam" id="3.30.420.10:FF:000009">
    <property type="entry name" value="Ribonuclease T"/>
    <property type="match status" value="1"/>
</dbReference>
<dbReference type="Gene3D" id="3.30.420.10">
    <property type="entry name" value="Ribonuclease H-like superfamily/Ribonuclease H"/>
    <property type="match status" value="1"/>
</dbReference>
<dbReference type="HAMAP" id="MF_00157">
    <property type="entry name" value="RNase_T"/>
    <property type="match status" value="1"/>
</dbReference>
<dbReference type="InterPro" id="IPR013520">
    <property type="entry name" value="Exonuclease_RNaseT/DNA_pol3"/>
</dbReference>
<dbReference type="InterPro" id="IPR005987">
    <property type="entry name" value="RNase_T"/>
</dbReference>
<dbReference type="InterPro" id="IPR012337">
    <property type="entry name" value="RNaseH-like_sf"/>
</dbReference>
<dbReference type="InterPro" id="IPR036397">
    <property type="entry name" value="RNaseH_sf"/>
</dbReference>
<dbReference type="NCBIfam" id="TIGR01298">
    <property type="entry name" value="RNaseT"/>
    <property type="match status" value="1"/>
</dbReference>
<dbReference type="PANTHER" id="PTHR30231">
    <property type="entry name" value="DNA POLYMERASE III SUBUNIT EPSILON"/>
    <property type="match status" value="1"/>
</dbReference>
<dbReference type="PANTHER" id="PTHR30231:SF2">
    <property type="entry name" value="RIBONUCLEASE T"/>
    <property type="match status" value="1"/>
</dbReference>
<dbReference type="Pfam" id="PF00929">
    <property type="entry name" value="RNase_T"/>
    <property type="match status" value="1"/>
</dbReference>
<dbReference type="SMART" id="SM00479">
    <property type="entry name" value="EXOIII"/>
    <property type="match status" value="1"/>
</dbReference>
<dbReference type="SUPFAM" id="SSF53098">
    <property type="entry name" value="Ribonuclease H-like"/>
    <property type="match status" value="1"/>
</dbReference>
<accession>Q1QVM9</accession>
<reference key="1">
    <citation type="journal article" date="2011" name="Stand. Genomic Sci.">
        <title>Complete genome sequence of the halophilic and highly halotolerant Chromohalobacter salexigens type strain (1H11(T)).</title>
        <authorList>
            <person name="Copeland A."/>
            <person name="O'Connor K."/>
            <person name="Lucas S."/>
            <person name="Lapidus A."/>
            <person name="Berry K.W."/>
            <person name="Detter J.C."/>
            <person name="Del Rio T.G."/>
            <person name="Hammon N."/>
            <person name="Dalin E."/>
            <person name="Tice H."/>
            <person name="Pitluck S."/>
            <person name="Bruce D."/>
            <person name="Goodwin L."/>
            <person name="Han C."/>
            <person name="Tapia R."/>
            <person name="Saunders E."/>
            <person name="Schmutz J."/>
            <person name="Brettin T."/>
            <person name="Larimer F."/>
            <person name="Land M."/>
            <person name="Hauser L."/>
            <person name="Vargas C."/>
            <person name="Nieto J.J."/>
            <person name="Kyrpides N.C."/>
            <person name="Ivanova N."/>
            <person name="Goker M."/>
            <person name="Klenk H.P."/>
            <person name="Csonka L.N."/>
            <person name="Woyke T."/>
        </authorList>
    </citation>
    <scope>NUCLEOTIDE SEQUENCE [LARGE SCALE GENOMIC DNA]</scope>
    <source>
        <strain>ATCC BAA-138 / DSM 3043 / CIP 106854 / NCIMB 13768 / 1H11</strain>
    </source>
</reference>
<protein>
    <recommendedName>
        <fullName evidence="1">Ribonuclease T</fullName>
        <ecNumber evidence="1">3.1.13.-</ecNumber>
    </recommendedName>
    <alternativeName>
        <fullName evidence="1">Exoribonuclease T</fullName>
        <shortName evidence="1">RNase T</shortName>
    </alternativeName>
</protein>
<sequence>MSDGQARDLMAQRFRGFLPVVVDLETGGFNAQRDALLEIAAVTLTMDAQGNLMPDDTHAFHVRPFEGANIEQAALDFTGIDLDSPLRQQVALSEHDALGEIFKPVRKAIKANQCTRAILVGHNAAFDQGFLNAAVERNGIKRNPFHPFSCFDTATLGGLVYGQTVLARACRAAGIEFDNASAHSARYDTERTAELFCAMVNRYKNLGGWDLALKEQGMDED</sequence>
<gene>
    <name evidence="1" type="primary">rnt</name>
    <name type="ordered locus">Csal_2128</name>
</gene>
<keyword id="KW-0269">Exonuclease</keyword>
<keyword id="KW-0378">Hydrolase</keyword>
<keyword id="KW-0460">Magnesium</keyword>
<keyword id="KW-0479">Metal-binding</keyword>
<keyword id="KW-0540">Nuclease</keyword>
<keyword id="KW-1185">Reference proteome</keyword>
<keyword id="KW-0819">tRNA processing</keyword>